<accession>P0ADA8</accession>
<accession>P17873</accession>
<gene>
    <name type="primary">osmB</name>
    <name type="ordered locus">c1753</name>
</gene>
<proteinExistence type="inferred from homology"/>
<comment type="function">
    <text evidence="1">Provides resistance to osmotic stress. May be important for stationary-phase survival (By similarity).</text>
</comment>
<comment type="subcellular location">
    <subcellularLocation>
        <location evidence="2">Cell membrane</location>
        <topology evidence="2">Lipid-anchor</topology>
    </subcellularLocation>
</comment>
<name>OSMB_ECOL6</name>
<evidence type="ECO:0000250" key="1"/>
<evidence type="ECO:0000255" key="2">
    <source>
        <dbReference type="PROSITE-ProRule" id="PRU00303"/>
    </source>
</evidence>
<evidence type="ECO:0000305" key="3"/>
<protein>
    <recommendedName>
        <fullName>Osmotically-inducible lipoprotein B</fullName>
    </recommendedName>
</protein>
<reference key="1">
    <citation type="journal article" date="2002" name="Proc. Natl. Acad. Sci. U.S.A.">
        <title>Extensive mosaic structure revealed by the complete genome sequence of uropathogenic Escherichia coli.</title>
        <authorList>
            <person name="Welch R.A."/>
            <person name="Burland V."/>
            <person name="Plunkett G. III"/>
            <person name="Redford P."/>
            <person name="Roesch P."/>
            <person name="Rasko D."/>
            <person name="Buckles E.L."/>
            <person name="Liou S.-R."/>
            <person name="Boutin A."/>
            <person name="Hackett J."/>
            <person name="Stroud D."/>
            <person name="Mayhew G.F."/>
            <person name="Rose D.J."/>
            <person name="Zhou S."/>
            <person name="Schwartz D.C."/>
            <person name="Perna N.T."/>
            <person name="Mobley H.L.T."/>
            <person name="Donnenberg M.S."/>
            <person name="Blattner F.R."/>
        </authorList>
    </citation>
    <scope>NUCLEOTIDE SEQUENCE [LARGE SCALE GENOMIC DNA]</scope>
    <source>
        <strain>CFT073 / ATCC 700928 / UPEC</strain>
    </source>
</reference>
<keyword id="KW-1003">Cell membrane</keyword>
<keyword id="KW-0449">Lipoprotein</keyword>
<keyword id="KW-0472">Membrane</keyword>
<keyword id="KW-0564">Palmitate</keyword>
<keyword id="KW-1185">Reference proteome</keyword>
<keyword id="KW-0732">Signal</keyword>
<organism>
    <name type="scientific">Escherichia coli O6:H1 (strain CFT073 / ATCC 700928 / UPEC)</name>
    <dbReference type="NCBI Taxonomy" id="199310"/>
    <lineage>
        <taxon>Bacteria</taxon>
        <taxon>Pseudomonadati</taxon>
        <taxon>Pseudomonadota</taxon>
        <taxon>Gammaproteobacteria</taxon>
        <taxon>Enterobacterales</taxon>
        <taxon>Enterobacteriaceae</taxon>
        <taxon>Escherichia</taxon>
    </lineage>
</organism>
<feature type="signal peptide" evidence="2">
    <location>
        <begin position="1"/>
        <end position="23"/>
    </location>
</feature>
<feature type="chain" id="PRO_0000043186" description="Osmotically-inducible lipoprotein B">
    <location>
        <begin position="24"/>
        <end position="72"/>
    </location>
</feature>
<feature type="lipid moiety-binding region" description="N-palmitoyl cysteine" evidence="3">
    <location>
        <position position="24"/>
    </location>
</feature>
<feature type="lipid moiety-binding region" description="S-diacylglycerol cysteine" evidence="3">
    <location>
        <position position="24"/>
    </location>
</feature>
<dbReference type="EMBL" id="AE014075">
    <property type="protein sequence ID" value="AAN80219.1"/>
    <property type="molecule type" value="Genomic_DNA"/>
</dbReference>
<dbReference type="RefSeq" id="WP_000498253.1">
    <property type="nucleotide sequence ID" value="NZ_CP051263.1"/>
</dbReference>
<dbReference type="STRING" id="199310.c1753"/>
<dbReference type="GeneID" id="93775406"/>
<dbReference type="KEGG" id="ecc:c1753"/>
<dbReference type="eggNOG" id="ENOG5032SFP">
    <property type="taxonomic scope" value="Bacteria"/>
</dbReference>
<dbReference type="HOGENOM" id="CLU_158447_1_2_6"/>
<dbReference type="BioCyc" id="ECOL199310:C1753-MONOMER"/>
<dbReference type="Proteomes" id="UP000001410">
    <property type="component" value="Chromosome"/>
</dbReference>
<dbReference type="GO" id="GO:0019867">
    <property type="term" value="C:outer membrane"/>
    <property type="evidence" value="ECO:0007669"/>
    <property type="project" value="InterPro"/>
</dbReference>
<dbReference type="GO" id="GO:0005886">
    <property type="term" value="C:plasma membrane"/>
    <property type="evidence" value="ECO:0007669"/>
    <property type="project" value="UniProtKB-SubCell"/>
</dbReference>
<dbReference type="InterPro" id="IPR008816">
    <property type="entry name" value="Gly_zipper_2TM_dom"/>
</dbReference>
<dbReference type="NCBIfam" id="NF007830">
    <property type="entry name" value="PRK10540.1"/>
    <property type="match status" value="1"/>
</dbReference>
<dbReference type="Pfam" id="PF05433">
    <property type="entry name" value="Rick_17kDa_Anti"/>
    <property type="match status" value="1"/>
</dbReference>
<dbReference type="PROSITE" id="PS51257">
    <property type="entry name" value="PROKAR_LIPOPROTEIN"/>
    <property type="match status" value="1"/>
</dbReference>
<sequence>MFVTSKKMTAAVLAITLAMSLSACSNWSKRDRNTAIGAGAGALGGAVLTDGSTLGTLGGAAVGGVIGHQVGK</sequence>